<protein>
    <recommendedName>
        <fullName>FMN-dependent NADPH-azoreductase</fullName>
        <ecNumber>1.7.-.-</ecNumber>
    </recommendedName>
    <alternativeName>
        <fullName>NADPH-dependent flavo-azoreductase</fullName>
    </alternativeName>
    <alternativeName>
        <fullName>NADPH-flavin azoreductase</fullName>
    </alternativeName>
</protein>
<organism>
    <name type="scientific">Staphylococcus aureus (strain Mu50 / ATCC 700699)</name>
    <dbReference type="NCBI Taxonomy" id="158878"/>
    <lineage>
        <taxon>Bacteria</taxon>
        <taxon>Bacillati</taxon>
        <taxon>Bacillota</taxon>
        <taxon>Bacilli</taxon>
        <taxon>Bacillales</taxon>
        <taxon>Staphylococcaceae</taxon>
        <taxon>Staphylococcus</taxon>
    </lineage>
</organism>
<name>AZO1_STAAM</name>
<gene>
    <name type="primary">azo1</name>
    <name type="ordered locus">SAV0560</name>
</gene>
<keyword id="KW-0285">Flavoprotein</keyword>
<keyword id="KW-0288">FMN</keyword>
<keyword id="KW-0521">NADP</keyword>
<keyword id="KW-0560">Oxidoreductase</keyword>
<comment type="function">
    <text evidence="1">Catalyzes the reductive cleavage of azo bond in aromatic azo compounds to the corresponding amines. Requires NADPH, but not NADH, as an electron donor for its activity (By similarity).</text>
</comment>
<comment type="cofactor">
    <cofactor evidence="1">
        <name>FMN</name>
        <dbReference type="ChEBI" id="CHEBI:58210"/>
    </cofactor>
</comment>
<comment type="subunit">
    <text evidence="1">Homotetramer.</text>
</comment>
<comment type="similarity">
    <text evidence="2">Belongs to the azoreductase type 2 family.</text>
</comment>
<dbReference type="EC" id="1.7.-.-"/>
<dbReference type="EMBL" id="BA000017">
    <property type="protein sequence ID" value="BAB56722.1"/>
    <property type="molecule type" value="Genomic_DNA"/>
</dbReference>
<dbReference type="RefSeq" id="WP_000677261.1">
    <property type="nucleotide sequence ID" value="NC_002758.2"/>
</dbReference>
<dbReference type="SMR" id="Q99W49"/>
<dbReference type="KEGG" id="sav:SAV0560"/>
<dbReference type="HOGENOM" id="CLU_055322_1_2_9"/>
<dbReference type="PhylomeDB" id="Q99W49"/>
<dbReference type="Proteomes" id="UP000002481">
    <property type="component" value="Chromosome"/>
</dbReference>
<dbReference type="GO" id="GO:0005829">
    <property type="term" value="C:cytosol"/>
    <property type="evidence" value="ECO:0007669"/>
    <property type="project" value="TreeGrafter"/>
</dbReference>
<dbReference type="GO" id="GO:0010181">
    <property type="term" value="F:FMN binding"/>
    <property type="evidence" value="ECO:0007669"/>
    <property type="project" value="TreeGrafter"/>
</dbReference>
<dbReference type="GO" id="GO:0016491">
    <property type="term" value="F:oxidoreductase activity"/>
    <property type="evidence" value="ECO:0007669"/>
    <property type="project" value="UniProtKB-KW"/>
</dbReference>
<dbReference type="Gene3D" id="3.40.50.360">
    <property type="match status" value="1"/>
</dbReference>
<dbReference type="InterPro" id="IPR029039">
    <property type="entry name" value="Flavoprotein-like_sf"/>
</dbReference>
<dbReference type="InterPro" id="IPR005025">
    <property type="entry name" value="FMN_Rdtase-like_dom"/>
</dbReference>
<dbReference type="InterPro" id="IPR050712">
    <property type="entry name" value="NAD(P)H-dep_reductase"/>
</dbReference>
<dbReference type="PANTHER" id="PTHR30543">
    <property type="entry name" value="CHROMATE REDUCTASE"/>
    <property type="match status" value="1"/>
</dbReference>
<dbReference type="PANTHER" id="PTHR30543:SF21">
    <property type="entry name" value="NAD(P)H-DEPENDENT FMN REDUCTASE LOT6"/>
    <property type="match status" value="1"/>
</dbReference>
<dbReference type="Pfam" id="PF03358">
    <property type="entry name" value="FMN_red"/>
    <property type="match status" value="1"/>
</dbReference>
<dbReference type="SUPFAM" id="SSF52218">
    <property type="entry name" value="Flavoproteins"/>
    <property type="match status" value="1"/>
</dbReference>
<proteinExistence type="inferred from homology"/>
<sequence length="188" mass="20912">MKGLIIIGSAQVNSHTSALARYLTEHFKTHDIEAEIFDLAEKPLNQLDFSGTTPSIDEIKQNMKDLKEKAMAADFLILGTPNYHGSYSGILKNALDHLNMDYFKMKPVGLIGNSGGIVSSEPLSHLRVIVRSLLGIAVPTQIATHDSDFAKNEDGSYYLNDSEFQLRARLFVDQIVSFVNNSPYEHLK</sequence>
<feature type="chain" id="PRO_0000245992" description="FMN-dependent NADPH-azoreductase">
    <location>
        <begin position="1"/>
        <end position="188"/>
    </location>
</feature>
<reference key="1">
    <citation type="journal article" date="2001" name="Lancet">
        <title>Whole genome sequencing of meticillin-resistant Staphylococcus aureus.</title>
        <authorList>
            <person name="Kuroda M."/>
            <person name="Ohta T."/>
            <person name="Uchiyama I."/>
            <person name="Baba T."/>
            <person name="Yuzawa H."/>
            <person name="Kobayashi I."/>
            <person name="Cui L."/>
            <person name="Oguchi A."/>
            <person name="Aoki K."/>
            <person name="Nagai Y."/>
            <person name="Lian J.-Q."/>
            <person name="Ito T."/>
            <person name="Kanamori M."/>
            <person name="Matsumaru H."/>
            <person name="Maruyama A."/>
            <person name="Murakami H."/>
            <person name="Hosoyama A."/>
            <person name="Mizutani-Ui Y."/>
            <person name="Takahashi N.K."/>
            <person name="Sawano T."/>
            <person name="Inoue R."/>
            <person name="Kaito C."/>
            <person name="Sekimizu K."/>
            <person name="Hirakawa H."/>
            <person name="Kuhara S."/>
            <person name="Goto S."/>
            <person name="Yabuzaki J."/>
            <person name="Kanehisa M."/>
            <person name="Yamashita A."/>
            <person name="Oshima K."/>
            <person name="Furuya K."/>
            <person name="Yoshino C."/>
            <person name="Shiba T."/>
            <person name="Hattori M."/>
            <person name="Ogasawara N."/>
            <person name="Hayashi H."/>
            <person name="Hiramatsu K."/>
        </authorList>
    </citation>
    <scope>NUCLEOTIDE SEQUENCE [LARGE SCALE GENOMIC DNA]</scope>
    <source>
        <strain>Mu50 / ATCC 700699</strain>
    </source>
</reference>
<accession>Q99W49</accession>
<evidence type="ECO:0000250" key="1"/>
<evidence type="ECO:0000305" key="2"/>